<evidence type="ECO:0000255" key="1">
    <source>
        <dbReference type="HAMAP-Rule" id="MF_00038"/>
    </source>
</evidence>
<keyword id="KW-0131">Cell cycle</keyword>
<keyword id="KW-0132">Cell division</keyword>
<keyword id="KW-1003">Cell membrane</keyword>
<keyword id="KW-0133">Cell shape</keyword>
<keyword id="KW-0961">Cell wall biogenesis/degradation</keyword>
<keyword id="KW-0460">Magnesium</keyword>
<keyword id="KW-0472">Membrane</keyword>
<keyword id="KW-0479">Metal-binding</keyword>
<keyword id="KW-0573">Peptidoglycan synthesis</keyword>
<keyword id="KW-0808">Transferase</keyword>
<keyword id="KW-0812">Transmembrane</keyword>
<keyword id="KW-1133">Transmembrane helix</keyword>
<accession>B2ISQ5</accession>
<organism>
    <name type="scientific">Streptococcus pneumoniae (strain CGSP14)</name>
    <dbReference type="NCBI Taxonomy" id="516950"/>
    <lineage>
        <taxon>Bacteria</taxon>
        <taxon>Bacillati</taxon>
        <taxon>Bacillota</taxon>
        <taxon>Bacilli</taxon>
        <taxon>Lactobacillales</taxon>
        <taxon>Streptococcaceae</taxon>
        <taxon>Streptococcus</taxon>
    </lineage>
</organism>
<protein>
    <recommendedName>
        <fullName evidence="1">Phospho-N-acetylmuramoyl-pentapeptide-transferase</fullName>
        <ecNumber evidence="1">2.7.8.13</ecNumber>
    </recommendedName>
    <alternativeName>
        <fullName evidence="1">UDP-MurNAc-pentapeptide phosphotransferase</fullName>
    </alternativeName>
</protein>
<comment type="function">
    <text evidence="1">Catalyzes the initial step of the lipid cycle reactions in the biosynthesis of the cell wall peptidoglycan: transfers peptidoglycan precursor phospho-MurNAc-pentapeptide from UDP-MurNAc-pentapeptide onto the lipid carrier undecaprenyl phosphate, yielding undecaprenyl-pyrophosphoryl-MurNAc-pentapeptide, known as lipid I.</text>
</comment>
<comment type="catalytic activity">
    <reaction evidence="1">
        <text>UDP-N-acetyl-alpha-D-muramoyl-L-alanyl-gamma-D-glutamyl-L-lysyl-D-alanyl-D-alanine + di-trans,octa-cis-undecaprenyl phosphate = Mur2Ac(oyl-L-Ala-gamma-D-Glu-L-Lys-D-Ala-D-Ala)-di-trans,octa-cis-undecaprenyl diphosphate + UMP</text>
        <dbReference type="Rhea" id="RHEA:21920"/>
        <dbReference type="ChEBI" id="CHEBI:57865"/>
        <dbReference type="ChEBI" id="CHEBI:60032"/>
        <dbReference type="ChEBI" id="CHEBI:60392"/>
        <dbReference type="ChEBI" id="CHEBI:70758"/>
        <dbReference type="EC" id="2.7.8.13"/>
    </reaction>
</comment>
<comment type="cofactor">
    <cofactor evidence="1">
        <name>Mg(2+)</name>
        <dbReference type="ChEBI" id="CHEBI:18420"/>
    </cofactor>
</comment>
<comment type="pathway">
    <text evidence="1">Cell wall biogenesis; peptidoglycan biosynthesis.</text>
</comment>
<comment type="subcellular location">
    <subcellularLocation>
        <location evidence="1">Cell membrane</location>
        <topology evidence="1">Multi-pass membrane protein</topology>
    </subcellularLocation>
</comment>
<comment type="similarity">
    <text evidence="1">Belongs to the glycosyltransferase 4 family. MraY subfamily.</text>
</comment>
<name>MRAY_STRPS</name>
<dbReference type="EC" id="2.7.8.13" evidence="1"/>
<dbReference type="EMBL" id="CP001033">
    <property type="protein sequence ID" value="ACB89592.1"/>
    <property type="molecule type" value="Genomic_DNA"/>
</dbReference>
<dbReference type="RefSeq" id="WP_000470846.1">
    <property type="nucleotide sequence ID" value="NC_010582.1"/>
</dbReference>
<dbReference type="SMR" id="B2ISQ5"/>
<dbReference type="KEGG" id="spw:SPCG_0340"/>
<dbReference type="HOGENOM" id="CLU_023982_0_1_9"/>
<dbReference type="UniPathway" id="UPA00219"/>
<dbReference type="GO" id="GO:0005886">
    <property type="term" value="C:plasma membrane"/>
    <property type="evidence" value="ECO:0007669"/>
    <property type="project" value="UniProtKB-SubCell"/>
</dbReference>
<dbReference type="GO" id="GO:0046872">
    <property type="term" value="F:metal ion binding"/>
    <property type="evidence" value="ECO:0007669"/>
    <property type="project" value="UniProtKB-KW"/>
</dbReference>
<dbReference type="GO" id="GO:0008963">
    <property type="term" value="F:phospho-N-acetylmuramoyl-pentapeptide-transferase activity"/>
    <property type="evidence" value="ECO:0007669"/>
    <property type="project" value="UniProtKB-UniRule"/>
</dbReference>
<dbReference type="GO" id="GO:0051301">
    <property type="term" value="P:cell division"/>
    <property type="evidence" value="ECO:0007669"/>
    <property type="project" value="UniProtKB-KW"/>
</dbReference>
<dbReference type="GO" id="GO:0071555">
    <property type="term" value="P:cell wall organization"/>
    <property type="evidence" value="ECO:0007669"/>
    <property type="project" value="UniProtKB-KW"/>
</dbReference>
<dbReference type="GO" id="GO:0009252">
    <property type="term" value="P:peptidoglycan biosynthetic process"/>
    <property type="evidence" value="ECO:0007669"/>
    <property type="project" value="UniProtKB-UniRule"/>
</dbReference>
<dbReference type="GO" id="GO:0008360">
    <property type="term" value="P:regulation of cell shape"/>
    <property type="evidence" value="ECO:0007669"/>
    <property type="project" value="UniProtKB-KW"/>
</dbReference>
<dbReference type="CDD" id="cd06852">
    <property type="entry name" value="GT_MraY"/>
    <property type="match status" value="1"/>
</dbReference>
<dbReference type="HAMAP" id="MF_00038">
    <property type="entry name" value="MraY"/>
    <property type="match status" value="1"/>
</dbReference>
<dbReference type="InterPro" id="IPR000715">
    <property type="entry name" value="Glycosyl_transferase_4"/>
</dbReference>
<dbReference type="InterPro" id="IPR003524">
    <property type="entry name" value="PNAcMuramoyl-5peptid_Trfase"/>
</dbReference>
<dbReference type="InterPro" id="IPR018480">
    <property type="entry name" value="PNAcMuramoyl-5peptid_Trfase_CS"/>
</dbReference>
<dbReference type="NCBIfam" id="TIGR00445">
    <property type="entry name" value="mraY"/>
    <property type="match status" value="1"/>
</dbReference>
<dbReference type="PANTHER" id="PTHR22926">
    <property type="entry name" value="PHOSPHO-N-ACETYLMURAMOYL-PENTAPEPTIDE-TRANSFERASE"/>
    <property type="match status" value="1"/>
</dbReference>
<dbReference type="PANTHER" id="PTHR22926:SF5">
    <property type="entry name" value="PHOSPHO-N-ACETYLMURAMOYL-PENTAPEPTIDE-TRANSFERASE HOMOLOG"/>
    <property type="match status" value="1"/>
</dbReference>
<dbReference type="Pfam" id="PF00953">
    <property type="entry name" value="Glycos_transf_4"/>
    <property type="match status" value="1"/>
</dbReference>
<dbReference type="Pfam" id="PF10555">
    <property type="entry name" value="MraY_sig1"/>
    <property type="match status" value="1"/>
</dbReference>
<dbReference type="PROSITE" id="PS01347">
    <property type="entry name" value="MRAY_1"/>
    <property type="match status" value="1"/>
</dbReference>
<dbReference type="PROSITE" id="PS01348">
    <property type="entry name" value="MRAY_2"/>
    <property type="match status" value="1"/>
</dbReference>
<sequence>MFISISAGVVTFLITLVGIPAFIQFYRKAQITGQQMHEDVKQHQAKAGTPTMGGLVFLIAAVVVSFLLALFSKQLTNNVGMILFILVLYGLVGFLDDFLKVFRKINEGLNPKQKLALQLLGGVIFYLFYERGGDMLSVFSYQVHLGIFYIIFALFWLVGFSNAVNLTDGIDGLASISVVISLSAYGVIAYVQGQMDILLVILAMIGGLLGFFVFNHKPAKVFMGDVGSLALGGMLAAISMALHQEWTLLIIGIVYVFETTSVMMQVSYFKLTGGKRIFRMTPVHHHFELGGLSGKGNPWSEWKVDFFFWGVGLLASLLTLAILYLM</sequence>
<gene>
    <name evidence="1" type="primary">mraY</name>
    <name type="ordered locus">SPCG_0340</name>
</gene>
<feature type="chain" id="PRO_1000090678" description="Phospho-N-acetylmuramoyl-pentapeptide-transferase">
    <location>
        <begin position="1"/>
        <end position="326"/>
    </location>
</feature>
<feature type="transmembrane region" description="Helical" evidence="1">
    <location>
        <begin position="3"/>
        <end position="23"/>
    </location>
</feature>
<feature type="transmembrane region" description="Helical" evidence="1">
    <location>
        <begin position="51"/>
        <end position="71"/>
    </location>
</feature>
<feature type="transmembrane region" description="Helical" evidence="1">
    <location>
        <begin position="79"/>
        <end position="99"/>
    </location>
</feature>
<feature type="transmembrane region" description="Helical" evidence="1">
    <location>
        <begin position="115"/>
        <end position="135"/>
    </location>
</feature>
<feature type="transmembrane region" description="Helical" evidence="1">
    <location>
        <begin position="138"/>
        <end position="158"/>
    </location>
</feature>
<feature type="transmembrane region" description="Helical" evidence="1">
    <location>
        <begin position="169"/>
        <end position="189"/>
    </location>
</feature>
<feature type="transmembrane region" description="Helical" evidence="1">
    <location>
        <begin position="195"/>
        <end position="215"/>
    </location>
</feature>
<feature type="transmembrane region" description="Helical" evidence="1">
    <location>
        <begin position="221"/>
        <end position="243"/>
    </location>
</feature>
<feature type="transmembrane region" description="Helical" evidence="1">
    <location>
        <begin position="306"/>
        <end position="326"/>
    </location>
</feature>
<reference key="1">
    <citation type="journal article" date="2009" name="BMC Genomics">
        <title>Genome evolution driven by host adaptations results in a more virulent and antimicrobial-resistant Streptococcus pneumoniae serotype 14.</title>
        <authorList>
            <person name="Ding F."/>
            <person name="Tang P."/>
            <person name="Hsu M.-H."/>
            <person name="Cui P."/>
            <person name="Hu S."/>
            <person name="Yu J."/>
            <person name="Chiu C.-H."/>
        </authorList>
    </citation>
    <scope>NUCLEOTIDE SEQUENCE [LARGE SCALE GENOMIC DNA]</scope>
    <source>
        <strain>CGSP14</strain>
    </source>
</reference>
<proteinExistence type="inferred from homology"/>